<proteinExistence type="inferred from homology"/>
<accession>Q9UWE4</accession>
<name>RL44_COPCI</name>
<gene>
    <name type="primary">RPL44</name>
    <name type="synonym">RPL41</name>
</gene>
<organism>
    <name type="scientific">Coprinopsis cinerea</name>
    <name type="common">Inky cap fungus</name>
    <name type="synonym">Hormographiella aspergillata</name>
    <dbReference type="NCBI Taxonomy" id="5346"/>
    <lineage>
        <taxon>Eukaryota</taxon>
        <taxon>Fungi</taxon>
        <taxon>Dikarya</taxon>
        <taxon>Basidiomycota</taxon>
        <taxon>Agaricomycotina</taxon>
        <taxon>Agaricomycetes</taxon>
        <taxon>Agaricomycetidae</taxon>
        <taxon>Agaricales</taxon>
        <taxon>Agaricineae</taxon>
        <taxon>Psathyrellaceae</taxon>
        <taxon>Coprinopsis</taxon>
    </lineage>
</organism>
<evidence type="ECO:0000250" key="1"/>
<evidence type="ECO:0000256" key="2">
    <source>
        <dbReference type="SAM" id="MobiDB-lite"/>
    </source>
</evidence>
<evidence type="ECO:0000305" key="3"/>
<comment type="similarity">
    <text evidence="3">Belongs to the eukaryotic ribosomal protein eL42 family.</text>
</comment>
<sequence length="106" mass="12240">MVNIPKTRRTYCKGKTCKKHTPHKVTQYKKGKDSIFAQGKRRYDRKQSGYGGQTKPVFHKKAKTTKKVVLRLECTVCKYKMQVSLKRCKHFELGGEKKTKGAALTF</sequence>
<feature type="initiator methionine" description="Removed" evidence="1">
    <location>
        <position position="1"/>
    </location>
</feature>
<feature type="chain" id="PRO_0000149137" description="Large ribosomal subunit protein eL42">
    <location>
        <begin position="2"/>
        <end position="106"/>
    </location>
</feature>
<feature type="region of interest" description="Disordered" evidence="2">
    <location>
        <begin position="36"/>
        <end position="56"/>
    </location>
</feature>
<dbReference type="EMBL" id="AB021315">
    <property type="protein sequence ID" value="BAA83465.1"/>
    <property type="molecule type" value="Genomic_DNA"/>
</dbReference>
<dbReference type="SMR" id="Q9UWE4"/>
<dbReference type="VEuPathDB" id="FungiDB:CC1G_05276"/>
<dbReference type="VEuPathDB" id="FungiDB:CC2G_003935"/>
<dbReference type="GO" id="GO:1990904">
    <property type="term" value="C:ribonucleoprotein complex"/>
    <property type="evidence" value="ECO:0007669"/>
    <property type="project" value="UniProtKB-KW"/>
</dbReference>
<dbReference type="GO" id="GO:0005840">
    <property type="term" value="C:ribosome"/>
    <property type="evidence" value="ECO:0007669"/>
    <property type="project" value="UniProtKB-KW"/>
</dbReference>
<dbReference type="GO" id="GO:0003735">
    <property type="term" value="F:structural constituent of ribosome"/>
    <property type="evidence" value="ECO:0007669"/>
    <property type="project" value="InterPro"/>
</dbReference>
<dbReference type="GO" id="GO:0006412">
    <property type="term" value="P:translation"/>
    <property type="evidence" value="ECO:0007669"/>
    <property type="project" value="InterPro"/>
</dbReference>
<dbReference type="FunFam" id="3.10.450.80:FF:000001">
    <property type="entry name" value="60S ribosomal protein L44"/>
    <property type="match status" value="1"/>
</dbReference>
<dbReference type="Gene3D" id="3.10.450.80">
    <property type="match status" value="1"/>
</dbReference>
<dbReference type="InterPro" id="IPR000552">
    <property type="entry name" value="Ribosomal_eL44"/>
</dbReference>
<dbReference type="InterPro" id="IPR053708">
    <property type="entry name" value="Ribosomal_LSU_eL42"/>
</dbReference>
<dbReference type="InterPro" id="IPR011332">
    <property type="entry name" value="Ribosomal_zn-bd"/>
</dbReference>
<dbReference type="PANTHER" id="PTHR10369">
    <property type="entry name" value="60S RIBOSOMAL PROTEIN L36A/L44"/>
    <property type="match status" value="1"/>
</dbReference>
<dbReference type="Pfam" id="PF00935">
    <property type="entry name" value="Ribosomal_L44"/>
    <property type="match status" value="1"/>
</dbReference>
<dbReference type="SUPFAM" id="SSF57829">
    <property type="entry name" value="Zn-binding ribosomal proteins"/>
    <property type="match status" value="1"/>
</dbReference>
<dbReference type="PROSITE" id="PS01172">
    <property type="entry name" value="RIBOSOMAL_L44E"/>
    <property type="match status" value="1"/>
</dbReference>
<protein>
    <recommendedName>
        <fullName evidence="3">Large ribosomal subunit protein eL42</fullName>
    </recommendedName>
    <alternativeName>
        <fullName>60S ribosomal protein L41</fullName>
    </alternativeName>
    <alternativeName>
        <fullName>60S ribosomal protein L44</fullName>
    </alternativeName>
</protein>
<keyword id="KW-0687">Ribonucleoprotein</keyword>
<keyword id="KW-0689">Ribosomal protein</keyword>
<reference key="1">
    <citation type="journal article" date="1999" name="Biochim. Biophys. Acta">
        <title>Nucleotide sequences of gene for ribosomal protein L41 and tRNAThr(AGU) from Coprinus cinereus.</title>
        <authorList>
            <person name="Aimi T."/>
            <person name="Tsugawa K."/>
            <person name="Yano T."/>
            <person name="Morinaga T."/>
        </authorList>
    </citation>
    <scope>NUCLEOTIDE SEQUENCE [GENOMIC DNA]</scope>
    <source>
        <strain>ATCC MYA-726 / 5302</strain>
    </source>
</reference>